<name>MDH_MORMI</name>
<accession>Q6AW23</accession>
<protein>
    <recommendedName>
        <fullName evidence="1">Malate dehydrogenase</fullName>
        <ecNumber evidence="1">1.1.1.37</ecNumber>
    </recommendedName>
</protein>
<reference key="1">
    <citation type="submission" date="2004-08" db="EMBL/GenBank/DDBJ databases">
        <title>Malate dehydrogenase of Moritella marina ATCC15381T.</title>
        <authorList>
            <person name="Nakayama A."/>
        </authorList>
    </citation>
    <scope>NUCLEOTIDE SEQUENCE [GENOMIC DNA]</scope>
    <source>
        <strain>ATCC 15381 / BCRC 15891 / CIP 102861 / NCIMB 1144 / MP-1</strain>
    </source>
</reference>
<comment type="function">
    <text evidence="1">Catalyzes the reversible oxidation of malate to oxaloacetate.</text>
</comment>
<comment type="catalytic activity">
    <reaction evidence="1">
        <text>(S)-malate + NAD(+) = oxaloacetate + NADH + H(+)</text>
        <dbReference type="Rhea" id="RHEA:21432"/>
        <dbReference type="ChEBI" id="CHEBI:15378"/>
        <dbReference type="ChEBI" id="CHEBI:15589"/>
        <dbReference type="ChEBI" id="CHEBI:16452"/>
        <dbReference type="ChEBI" id="CHEBI:57540"/>
        <dbReference type="ChEBI" id="CHEBI:57945"/>
        <dbReference type="EC" id="1.1.1.37"/>
    </reaction>
</comment>
<comment type="subunit">
    <text evidence="1">Homodimer.</text>
</comment>
<comment type="similarity">
    <text evidence="1">Belongs to the LDH/MDH superfamily. MDH type 1 family.</text>
</comment>
<proteinExistence type="inferred from homology"/>
<gene>
    <name evidence="1" type="primary">mdh</name>
</gene>
<dbReference type="EC" id="1.1.1.37" evidence="1"/>
<dbReference type="EMBL" id="AB187216">
    <property type="protein sequence ID" value="BAD36745.1"/>
    <property type="molecule type" value="Genomic_DNA"/>
</dbReference>
<dbReference type="RefSeq" id="WP_019442157.1">
    <property type="nucleotide sequence ID" value="NZ_CAXYEI010000017.1"/>
</dbReference>
<dbReference type="SMR" id="Q6AW23"/>
<dbReference type="GO" id="GO:0005737">
    <property type="term" value="C:cytoplasm"/>
    <property type="evidence" value="ECO:0007669"/>
    <property type="project" value="TreeGrafter"/>
</dbReference>
<dbReference type="GO" id="GO:0030060">
    <property type="term" value="F:L-malate dehydrogenase (NAD+) activity"/>
    <property type="evidence" value="ECO:0007669"/>
    <property type="project" value="UniProtKB-UniRule"/>
</dbReference>
<dbReference type="GO" id="GO:0006108">
    <property type="term" value="P:malate metabolic process"/>
    <property type="evidence" value="ECO:0007669"/>
    <property type="project" value="InterPro"/>
</dbReference>
<dbReference type="GO" id="GO:0006099">
    <property type="term" value="P:tricarboxylic acid cycle"/>
    <property type="evidence" value="ECO:0007669"/>
    <property type="project" value="UniProtKB-UniRule"/>
</dbReference>
<dbReference type="CDD" id="cd01337">
    <property type="entry name" value="MDH_glyoxysomal_mitochondrial"/>
    <property type="match status" value="1"/>
</dbReference>
<dbReference type="FunFam" id="3.40.50.720:FF:000017">
    <property type="entry name" value="Malate dehydrogenase"/>
    <property type="match status" value="1"/>
</dbReference>
<dbReference type="FunFam" id="3.90.110.10:FF:000001">
    <property type="entry name" value="Malate dehydrogenase"/>
    <property type="match status" value="1"/>
</dbReference>
<dbReference type="Gene3D" id="3.90.110.10">
    <property type="entry name" value="Lactate dehydrogenase/glycoside hydrolase, family 4, C-terminal"/>
    <property type="match status" value="1"/>
</dbReference>
<dbReference type="Gene3D" id="3.40.50.720">
    <property type="entry name" value="NAD(P)-binding Rossmann-like Domain"/>
    <property type="match status" value="1"/>
</dbReference>
<dbReference type="HAMAP" id="MF_01516">
    <property type="entry name" value="Malate_dehydrog_1"/>
    <property type="match status" value="1"/>
</dbReference>
<dbReference type="InterPro" id="IPR001557">
    <property type="entry name" value="L-lactate/malate_DH"/>
</dbReference>
<dbReference type="InterPro" id="IPR022383">
    <property type="entry name" value="Lactate/malate_DH_C"/>
</dbReference>
<dbReference type="InterPro" id="IPR001236">
    <property type="entry name" value="Lactate/malate_DH_N"/>
</dbReference>
<dbReference type="InterPro" id="IPR015955">
    <property type="entry name" value="Lactate_DH/Glyco_Ohase_4_C"/>
</dbReference>
<dbReference type="InterPro" id="IPR001252">
    <property type="entry name" value="Malate_DH_AS"/>
</dbReference>
<dbReference type="InterPro" id="IPR010097">
    <property type="entry name" value="Malate_DH_type1"/>
</dbReference>
<dbReference type="InterPro" id="IPR023958">
    <property type="entry name" value="Malate_DH_type1_bac"/>
</dbReference>
<dbReference type="InterPro" id="IPR036291">
    <property type="entry name" value="NAD(P)-bd_dom_sf"/>
</dbReference>
<dbReference type="NCBIfam" id="TIGR01772">
    <property type="entry name" value="MDH_euk_gproteo"/>
    <property type="match status" value="1"/>
</dbReference>
<dbReference type="PANTHER" id="PTHR11540">
    <property type="entry name" value="MALATE AND LACTATE DEHYDROGENASE"/>
    <property type="match status" value="1"/>
</dbReference>
<dbReference type="PANTHER" id="PTHR11540:SF16">
    <property type="entry name" value="MALATE DEHYDROGENASE, MITOCHONDRIAL"/>
    <property type="match status" value="1"/>
</dbReference>
<dbReference type="Pfam" id="PF02866">
    <property type="entry name" value="Ldh_1_C"/>
    <property type="match status" value="1"/>
</dbReference>
<dbReference type="Pfam" id="PF00056">
    <property type="entry name" value="Ldh_1_N"/>
    <property type="match status" value="1"/>
</dbReference>
<dbReference type="PIRSF" id="PIRSF000102">
    <property type="entry name" value="Lac_mal_DH"/>
    <property type="match status" value="1"/>
</dbReference>
<dbReference type="SUPFAM" id="SSF56327">
    <property type="entry name" value="LDH C-terminal domain-like"/>
    <property type="match status" value="1"/>
</dbReference>
<dbReference type="SUPFAM" id="SSF51735">
    <property type="entry name" value="NAD(P)-binding Rossmann-fold domains"/>
    <property type="match status" value="1"/>
</dbReference>
<dbReference type="PROSITE" id="PS00068">
    <property type="entry name" value="MDH"/>
    <property type="match status" value="1"/>
</dbReference>
<evidence type="ECO:0000255" key="1">
    <source>
        <dbReference type="HAMAP-Rule" id="MF_01516"/>
    </source>
</evidence>
<sequence>MKVAVLGAAGGIGQALALLLKTQLPAGSDLSLYDIAPVTPGVAVDLSHIPTDVTIAGFAGMDPTDALVGADVVLISAGVARKPGMDRSDLFNINAGIIKNLAGKCAEVCPNACIGIITNPVNTTVPIAAEVLKQAGVYDKRKLFGITTLDVIRSETFVSELKGISLADVEVPVIGGHSGVTILPLLSQVKGVEFTAEEIATLTPRIQNAGTEVVEAKAGGGSATLSMGQAAARFGLSLVRALQGEEGIVECTYVDGGSEHATFFAQPVLLGKNGVEEVLAYGELSEFETNARDAMLEELKANITLGEEFVAG</sequence>
<organism>
    <name type="scientific">Moritella marina</name>
    <name type="common">Vibrio marinus</name>
    <dbReference type="NCBI Taxonomy" id="90736"/>
    <lineage>
        <taxon>Bacteria</taxon>
        <taxon>Pseudomonadati</taxon>
        <taxon>Pseudomonadota</taxon>
        <taxon>Gammaproteobacteria</taxon>
        <taxon>Alteromonadales</taxon>
        <taxon>Moritellaceae</taxon>
        <taxon>Moritella</taxon>
    </lineage>
</organism>
<feature type="chain" id="PRO_0000113330" description="Malate dehydrogenase">
    <location>
        <begin position="1"/>
        <end position="312"/>
    </location>
</feature>
<feature type="active site" description="Proton acceptor" evidence="1">
    <location>
        <position position="177"/>
    </location>
</feature>
<feature type="binding site" evidence="1">
    <location>
        <begin position="7"/>
        <end position="13"/>
    </location>
    <ligand>
        <name>NAD(+)</name>
        <dbReference type="ChEBI" id="CHEBI:57540"/>
    </ligand>
</feature>
<feature type="binding site" evidence="1">
    <location>
        <position position="34"/>
    </location>
    <ligand>
        <name>NAD(+)</name>
        <dbReference type="ChEBI" id="CHEBI:57540"/>
    </ligand>
</feature>
<feature type="binding site" evidence="1">
    <location>
        <position position="81"/>
    </location>
    <ligand>
        <name>substrate</name>
    </ligand>
</feature>
<feature type="binding site" evidence="1">
    <location>
        <position position="87"/>
    </location>
    <ligand>
        <name>substrate</name>
    </ligand>
</feature>
<feature type="binding site" evidence="1">
    <location>
        <position position="94"/>
    </location>
    <ligand>
        <name>NAD(+)</name>
        <dbReference type="ChEBI" id="CHEBI:57540"/>
    </ligand>
</feature>
<feature type="binding site" evidence="1">
    <location>
        <begin position="117"/>
        <end position="119"/>
    </location>
    <ligand>
        <name>NAD(+)</name>
        <dbReference type="ChEBI" id="CHEBI:57540"/>
    </ligand>
</feature>
<feature type="binding site" evidence="1">
    <location>
        <position position="119"/>
    </location>
    <ligand>
        <name>substrate</name>
    </ligand>
</feature>
<feature type="binding site" evidence="1">
    <location>
        <position position="153"/>
    </location>
    <ligand>
        <name>substrate</name>
    </ligand>
</feature>
<feature type="binding site" evidence="1">
    <location>
        <position position="227"/>
    </location>
    <ligand>
        <name>NAD(+)</name>
        <dbReference type="ChEBI" id="CHEBI:57540"/>
    </ligand>
</feature>
<keyword id="KW-0520">NAD</keyword>
<keyword id="KW-0560">Oxidoreductase</keyword>
<keyword id="KW-0816">Tricarboxylic acid cycle</keyword>